<reference key="1">
    <citation type="journal article" date="2003" name="Mol. Microbiol.">
        <title>An integrated analysis of the genome of the hyperthermophilic archaeon Pyrococcus abyssi.</title>
        <authorList>
            <person name="Cohen G.N."/>
            <person name="Barbe V."/>
            <person name="Flament D."/>
            <person name="Galperin M."/>
            <person name="Heilig R."/>
            <person name="Lecompte O."/>
            <person name="Poch O."/>
            <person name="Prieur D."/>
            <person name="Querellou J."/>
            <person name="Ripp R."/>
            <person name="Thierry J.-C."/>
            <person name="Van der Oost J."/>
            <person name="Weissenbach J."/>
            <person name="Zivanovic Y."/>
            <person name="Forterre P."/>
        </authorList>
    </citation>
    <scope>NUCLEOTIDE SEQUENCE [LARGE SCALE GENOMIC DNA]</scope>
    <source>
        <strain>GE5 / Orsay</strain>
    </source>
</reference>
<reference key="2">
    <citation type="journal article" date="2012" name="Curr. Microbiol.">
        <title>Re-annotation of two hyperthermophilic archaea Pyrococcus abyssi GE5 and Pyrococcus furiosus DSM 3638.</title>
        <authorList>
            <person name="Gao J."/>
            <person name="Wang J."/>
        </authorList>
    </citation>
    <scope>GENOME REANNOTATION</scope>
    <source>
        <strain>GE5 / Orsay</strain>
    </source>
</reference>
<dbReference type="EMBL" id="AJ248284">
    <property type="protein sequence ID" value="CAB49451.1"/>
    <property type="molecule type" value="Genomic_DNA"/>
</dbReference>
<dbReference type="EMBL" id="HE613800">
    <property type="protein sequence ID" value="CCE69918.1"/>
    <property type="molecule type" value="Genomic_DNA"/>
</dbReference>
<dbReference type="PIR" id="D75171">
    <property type="entry name" value="D75171"/>
</dbReference>
<dbReference type="RefSeq" id="WP_010867653.1">
    <property type="nucleotide sequence ID" value="NC_000868.1"/>
</dbReference>
<dbReference type="PDB" id="4CVN">
    <property type="method" value="X-ray"/>
    <property type="resolution" value="2.12 A"/>
    <property type="chains" value="E/F/G/H=1-137"/>
</dbReference>
<dbReference type="PDB" id="4CW7">
    <property type="method" value="X-ray"/>
    <property type="resolution" value="2.46 A"/>
    <property type="chains" value="B/D/F/H=1-137"/>
</dbReference>
<dbReference type="PDB" id="5JB3">
    <property type="method" value="EM"/>
    <property type="resolution" value="5.34 A"/>
    <property type="chains" value="M=1-137"/>
</dbReference>
<dbReference type="PDB" id="5JBH">
    <property type="method" value="EM"/>
    <property type="resolution" value="5.34 A"/>
    <property type="chains" value="M=1-137"/>
</dbReference>
<dbReference type="PDB" id="6SW9">
    <property type="method" value="EM"/>
    <property type="resolution" value="4.20 A"/>
    <property type="chains" value="M=1-137"/>
</dbReference>
<dbReference type="PDB" id="6SWC">
    <property type="method" value="EM"/>
    <property type="resolution" value="3.30 A"/>
    <property type="chains" value="M=1-137"/>
</dbReference>
<dbReference type="PDB" id="6SWD">
    <property type="method" value="EM"/>
    <property type="resolution" value="3.20 A"/>
    <property type="chains" value="M=1-137"/>
</dbReference>
<dbReference type="PDB" id="7ZAG">
    <property type="method" value="EM"/>
    <property type="resolution" value="2.77 A"/>
    <property type="chains" value="M=1-137"/>
</dbReference>
<dbReference type="PDB" id="7ZAH">
    <property type="method" value="EM"/>
    <property type="resolution" value="2.70 A"/>
    <property type="chains" value="M=1-137"/>
</dbReference>
<dbReference type="PDB" id="7ZAI">
    <property type="method" value="EM"/>
    <property type="resolution" value="2.60 A"/>
    <property type="chains" value="M=1-137"/>
</dbReference>
<dbReference type="PDB" id="7ZHG">
    <property type="method" value="EM"/>
    <property type="resolution" value="2.25 A"/>
    <property type="chains" value="M=1-137"/>
</dbReference>
<dbReference type="PDBsum" id="4CVN"/>
<dbReference type="PDBsum" id="4CW7"/>
<dbReference type="PDBsum" id="5JB3"/>
<dbReference type="PDBsum" id="5JBH"/>
<dbReference type="PDBsum" id="6SW9"/>
<dbReference type="PDBsum" id="6SWC"/>
<dbReference type="PDBsum" id="6SWD"/>
<dbReference type="PDBsum" id="7ZAG"/>
<dbReference type="PDBsum" id="7ZAH"/>
<dbReference type="PDBsum" id="7ZAI"/>
<dbReference type="PDBsum" id="7ZHG"/>
<dbReference type="EMDB" id="EMD-10320"/>
<dbReference type="EMDB" id="EMD-10322"/>
<dbReference type="EMDB" id="EMD-10323"/>
<dbReference type="EMDB" id="EMD-14579"/>
<dbReference type="EMDB" id="EMD-14580"/>
<dbReference type="EMDB" id="EMD-14581"/>
<dbReference type="EMDB" id="EMD-14731"/>
<dbReference type="EMDB" id="EMD-8148"/>
<dbReference type="EMDB" id="EMD-8149"/>
<dbReference type="SMR" id="P62010"/>
<dbReference type="STRING" id="272844.PAB0362"/>
<dbReference type="KEGG" id="pab:PAB0362"/>
<dbReference type="PATRIC" id="fig|272844.11.peg.564"/>
<dbReference type="eggNOG" id="arCOG04240">
    <property type="taxonomic scope" value="Archaea"/>
</dbReference>
<dbReference type="HOGENOM" id="CLU_072439_6_1_2"/>
<dbReference type="OrthoDB" id="12054at2157"/>
<dbReference type="PhylomeDB" id="P62010"/>
<dbReference type="EvolutionaryTrace" id="P62010"/>
<dbReference type="Proteomes" id="UP000000810">
    <property type="component" value="Chromosome"/>
</dbReference>
<dbReference type="Proteomes" id="UP000009139">
    <property type="component" value="Chromosome"/>
</dbReference>
<dbReference type="GO" id="GO:1990904">
    <property type="term" value="C:ribonucleoprotein complex"/>
    <property type="evidence" value="ECO:0007669"/>
    <property type="project" value="UniProtKB-KW"/>
</dbReference>
<dbReference type="GO" id="GO:0005840">
    <property type="term" value="C:ribosome"/>
    <property type="evidence" value="ECO:0007669"/>
    <property type="project" value="UniProtKB-KW"/>
</dbReference>
<dbReference type="GO" id="GO:0019843">
    <property type="term" value="F:rRNA binding"/>
    <property type="evidence" value="ECO:0007669"/>
    <property type="project" value="UniProtKB-UniRule"/>
</dbReference>
<dbReference type="GO" id="GO:0003735">
    <property type="term" value="F:structural constituent of ribosome"/>
    <property type="evidence" value="ECO:0007669"/>
    <property type="project" value="InterPro"/>
</dbReference>
<dbReference type="GO" id="GO:0006412">
    <property type="term" value="P:translation"/>
    <property type="evidence" value="ECO:0007669"/>
    <property type="project" value="UniProtKB-UniRule"/>
</dbReference>
<dbReference type="FunFam" id="3.30.420.80:FF:000007">
    <property type="entry name" value="30S ribosomal protein S11"/>
    <property type="match status" value="1"/>
</dbReference>
<dbReference type="Gene3D" id="3.30.420.80">
    <property type="entry name" value="Ribosomal protein S11"/>
    <property type="match status" value="1"/>
</dbReference>
<dbReference type="HAMAP" id="MF_01310">
    <property type="entry name" value="Ribosomal_uS11"/>
    <property type="match status" value="1"/>
</dbReference>
<dbReference type="InterPro" id="IPR001971">
    <property type="entry name" value="Ribosomal_uS11"/>
</dbReference>
<dbReference type="InterPro" id="IPR019961">
    <property type="entry name" value="Ribosomal_uS11_archaeal"/>
</dbReference>
<dbReference type="InterPro" id="IPR018102">
    <property type="entry name" value="Ribosomal_uS11_CS"/>
</dbReference>
<dbReference type="InterPro" id="IPR036967">
    <property type="entry name" value="Ribosomal_uS11_sf"/>
</dbReference>
<dbReference type="NCBIfam" id="TIGR03628">
    <property type="entry name" value="arch_S11P"/>
    <property type="match status" value="1"/>
</dbReference>
<dbReference type="NCBIfam" id="NF007176">
    <property type="entry name" value="PRK09607.1"/>
    <property type="match status" value="1"/>
</dbReference>
<dbReference type="PANTHER" id="PTHR11759">
    <property type="entry name" value="40S RIBOSOMAL PROTEIN S14/30S RIBOSOMAL PROTEIN S11"/>
    <property type="match status" value="1"/>
</dbReference>
<dbReference type="Pfam" id="PF00411">
    <property type="entry name" value="Ribosomal_S11"/>
    <property type="match status" value="1"/>
</dbReference>
<dbReference type="PIRSF" id="PIRSF002131">
    <property type="entry name" value="Ribosomal_S11"/>
    <property type="match status" value="1"/>
</dbReference>
<dbReference type="SUPFAM" id="SSF53137">
    <property type="entry name" value="Translational machinery components"/>
    <property type="match status" value="1"/>
</dbReference>
<dbReference type="PROSITE" id="PS00054">
    <property type="entry name" value="RIBOSOMAL_S11"/>
    <property type="match status" value="1"/>
</dbReference>
<evidence type="ECO:0000255" key="1">
    <source>
        <dbReference type="HAMAP-Rule" id="MF_01310"/>
    </source>
</evidence>
<evidence type="ECO:0000256" key="2">
    <source>
        <dbReference type="SAM" id="MobiDB-lite"/>
    </source>
</evidence>
<evidence type="ECO:0000305" key="3"/>
<evidence type="ECO:0007829" key="4">
    <source>
        <dbReference type="PDB" id="4CVN"/>
    </source>
</evidence>
<evidence type="ECO:0007829" key="5">
    <source>
        <dbReference type="PDB" id="4CW7"/>
    </source>
</evidence>
<protein>
    <recommendedName>
        <fullName evidence="1">Small ribosomal subunit protein uS11</fullName>
    </recommendedName>
    <alternativeName>
        <fullName evidence="3">30S ribosomal protein S11</fullName>
    </alternativeName>
</protein>
<proteinExistence type="evidence at protein level"/>
<comment type="function">
    <text evidence="1">Located on the platform of the 30S subunit.</text>
</comment>
<comment type="subunit">
    <text evidence="1">Part of the 30S ribosomal subunit.</text>
</comment>
<comment type="similarity">
    <text evidence="1">Belongs to the universal ribosomal protein uS11 family.</text>
</comment>
<sequence length="137" mass="14745">MSEEQVNIKKKEKWGIAHIYSSYNNTIIHITDITGAETISRWSGGMVVKADRDEPSPYAAMLAARRAAEEALEKGIVGVHIRVRAPGGSKSKTPGPGAQAAIRALARAGLKIGRVEDVTPIPHDGTRPKGGRRGRRV</sequence>
<accession>P62010</accession>
<accession>G8ZGN9</accession>
<accession>O59304</accession>
<gene>
    <name evidence="1" type="primary">rps11</name>
    <name type="ordered locus">PYRAB05290</name>
    <name type="ORF">PAB0362</name>
</gene>
<organism>
    <name type="scientific">Pyrococcus abyssi (strain GE5 / Orsay)</name>
    <dbReference type="NCBI Taxonomy" id="272844"/>
    <lineage>
        <taxon>Archaea</taxon>
        <taxon>Methanobacteriati</taxon>
        <taxon>Methanobacteriota</taxon>
        <taxon>Thermococci</taxon>
        <taxon>Thermococcales</taxon>
        <taxon>Thermococcaceae</taxon>
        <taxon>Pyrococcus</taxon>
    </lineage>
</organism>
<feature type="chain" id="PRO_0000123277" description="Small ribosomal subunit protein uS11">
    <location>
        <begin position="1"/>
        <end position="137"/>
    </location>
</feature>
<feature type="region of interest" description="Disordered" evidence="2">
    <location>
        <begin position="116"/>
        <end position="137"/>
    </location>
</feature>
<feature type="strand" evidence="4">
    <location>
        <begin position="14"/>
        <end position="21"/>
    </location>
</feature>
<feature type="strand" evidence="4">
    <location>
        <begin position="26"/>
        <end position="32"/>
    </location>
</feature>
<feature type="strand" evidence="4">
    <location>
        <begin position="37"/>
        <end position="43"/>
    </location>
</feature>
<feature type="helix" evidence="4">
    <location>
        <begin position="44"/>
        <end position="47"/>
    </location>
</feature>
<feature type="helix" evidence="4">
    <location>
        <begin position="51"/>
        <end position="53"/>
    </location>
</feature>
<feature type="helix" evidence="4">
    <location>
        <begin position="57"/>
        <end position="73"/>
    </location>
</feature>
<feature type="strand" evidence="4">
    <location>
        <begin position="78"/>
        <end position="84"/>
    </location>
</feature>
<feature type="strand" evidence="5">
    <location>
        <begin position="89"/>
        <end position="91"/>
    </location>
</feature>
<feature type="helix" evidence="4">
    <location>
        <begin position="97"/>
        <end position="107"/>
    </location>
</feature>
<feature type="strand" evidence="4">
    <location>
        <begin position="111"/>
        <end position="117"/>
    </location>
</feature>
<feature type="strand" evidence="4">
    <location>
        <begin position="125"/>
        <end position="128"/>
    </location>
</feature>
<feature type="helix" evidence="4">
    <location>
        <begin position="132"/>
        <end position="134"/>
    </location>
</feature>
<keyword id="KW-0002">3D-structure</keyword>
<keyword id="KW-0687">Ribonucleoprotein</keyword>
<keyword id="KW-0689">Ribosomal protein</keyword>
<keyword id="KW-0694">RNA-binding</keyword>
<keyword id="KW-0699">rRNA-binding</keyword>
<name>RS11_PYRAB</name>